<keyword id="KW-0238">DNA-binding</keyword>
<keyword id="KW-0539">Nucleus</keyword>
<keyword id="KW-1185">Reference proteome</keyword>
<keyword id="KW-0804">Transcription</keyword>
<keyword id="KW-0805">Transcription regulation</keyword>
<evidence type="ECO:0000255" key="1">
    <source>
        <dbReference type="PROSITE-ProRule" id="PRU00981"/>
    </source>
</evidence>
<evidence type="ECO:0000256" key="2">
    <source>
        <dbReference type="SAM" id="MobiDB-lite"/>
    </source>
</evidence>
<evidence type="ECO:0000269" key="3">
    <source>
    </source>
</evidence>
<evidence type="ECO:0000269" key="4">
    <source>
    </source>
</evidence>
<evidence type="ECO:0000305" key="5"/>
<name>BH032_ARATH</name>
<gene>
    <name type="primary">BHLH32</name>
    <name type="synonym">EN54</name>
    <name type="synonym">TMO5</name>
    <name type="ordered locus">At3g25710</name>
    <name type="ORF">K13N2.1</name>
</gene>
<proteinExistence type="evidence at protein level"/>
<dbReference type="EMBL" id="DQ205679">
    <property type="protein sequence ID" value="ABA54263.1"/>
    <property type="molecule type" value="mRNA"/>
</dbReference>
<dbReference type="EMBL" id="AB028607">
    <property type="protein sequence ID" value="BAA95758.1"/>
    <property type="molecule type" value="Genomic_DNA"/>
</dbReference>
<dbReference type="EMBL" id="CP002686">
    <property type="protein sequence ID" value="AEE77056.1"/>
    <property type="molecule type" value="Genomic_DNA"/>
</dbReference>
<dbReference type="EMBL" id="AY058840">
    <property type="protein sequence ID" value="AAL24228.1"/>
    <property type="molecule type" value="mRNA"/>
</dbReference>
<dbReference type="EMBL" id="AY079033">
    <property type="protein sequence ID" value="AAL79583.1"/>
    <property type="molecule type" value="mRNA"/>
</dbReference>
<dbReference type="EMBL" id="AY086383">
    <property type="protein sequence ID" value="AAM64450.1"/>
    <property type="molecule type" value="mRNA"/>
</dbReference>
<dbReference type="EMBL" id="AF488571">
    <property type="status" value="NOT_ANNOTATED_CDS"/>
    <property type="molecule type" value="mRNA"/>
</dbReference>
<dbReference type="RefSeq" id="NP_189199.1">
    <property type="nucleotide sequence ID" value="NM_113470.3"/>
</dbReference>
<dbReference type="SMR" id="Q9LS08"/>
<dbReference type="BioGRID" id="7490">
    <property type="interactions" value="13"/>
</dbReference>
<dbReference type="FunCoup" id="Q9LS08">
    <property type="interactions" value="17"/>
</dbReference>
<dbReference type="IntAct" id="Q9LS08">
    <property type="interactions" value="15"/>
</dbReference>
<dbReference type="STRING" id="3702.Q9LS08"/>
<dbReference type="PaxDb" id="3702-AT3G25710.1"/>
<dbReference type="ProteomicsDB" id="240670"/>
<dbReference type="EnsemblPlants" id="AT3G25710.1">
    <property type="protein sequence ID" value="AT3G25710.1"/>
    <property type="gene ID" value="AT3G25710"/>
</dbReference>
<dbReference type="GeneID" id="822159"/>
<dbReference type="Gramene" id="AT3G25710.1">
    <property type="protein sequence ID" value="AT3G25710.1"/>
    <property type="gene ID" value="AT3G25710"/>
</dbReference>
<dbReference type="KEGG" id="ath:AT3G25710"/>
<dbReference type="Araport" id="AT3G25710"/>
<dbReference type="TAIR" id="AT3G25710">
    <property type="gene designation" value="BHLH32"/>
</dbReference>
<dbReference type="eggNOG" id="ENOG502QRXD">
    <property type="taxonomic scope" value="Eukaryota"/>
</dbReference>
<dbReference type="HOGENOM" id="CLU_046614_0_0_1"/>
<dbReference type="InParanoid" id="Q9LS08"/>
<dbReference type="OMA" id="PMTMMQM"/>
<dbReference type="OrthoDB" id="71302at2759"/>
<dbReference type="PhylomeDB" id="Q9LS08"/>
<dbReference type="PRO" id="PR:Q9LS08"/>
<dbReference type="Proteomes" id="UP000006548">
    <property type="component" value="Chromosome 3"/>
</dbReference>
<dbReference type="ExpressionAtlas" id="Q9LS08">
    <property type="expression patterns" value="baseline and differential"/>
</dbReference>
<dbReference type="GO" id="GO:0005634">
    <property type="term" value="C:nucleus"/>
    <property type="evidence" value="ECO:0000314"/>
    <property type="project" value="TAIR"/>
</dbReference>
<dbReference type="GO" id="GO:0003677">
    <property type="term" value="F:DNA binding"/>
    <property type="evidence" value="ECO:0007669"/>
    <property type="project" value="UniProtKB-KW"/>
</dbReference>
<dbReference type="GO" id="GO:0003700">
    <property type="term" value="F:DNA-binding transcription factor activity"/>
    <property type="evidence" value="ECO:0000250"/>
    <property type="project" value="TAIR"/>
</dbReference>
<dbReference type="GO" id="GO:0046983">
    <property type="term" value="F:protein dimerization activity"/>
    <property type="evidence" value="ECO:0007669"/>
    <property type="project" value="InterPro"/>
</dbReference>
<dbReference type="GO" id="GO:0009718">
    <property type="term" value="P:anthocyanin-containing compound biosynthetic process"/>
    <property type="evidence" value="ECO:0000315"/>
    <property type="project" value="TAIR"/>
</dbReference>
<dbReference type="GO" id="GO:0016036">
    <property type="term" value="P:cellular response to phosphate starvation"/>
    <property type="evidence" value="ECO:0000315"/>
    <property type="project" value="TAIR"/>
</dbReference>
<dbReference type="GO" id="GO:0006355">
    <property type="term" value="P:regulation of DNA-templated transcription"/>
    <property type="evidence" value="ECO:0000304"/>
    <property type="project" value="TAIR"/>
</dbReference>
<dbReference type="GO" id="GO:0048364">
    <property type="term" value="P:root development"/>
    <property type="evidence" value="ECO:0000270"/>
    <property type="project" value="TAIR"/>
</dbReference>
<dbReference type="GO" id="GO:0080147">
    <property type="term" value="P:root hair cell development"/>
    <property type="evidence" value="ECO:0000315"/>
    <property type="project" value="TAIR"/>
</dbReference>
<dbReference type="CDD" id="cd11455">
    <property type="entry name" value="bHLH_AtAIG1_like"/>
    <property type="match status" value="1"/>
</dbReference>
<dbReference type="FunFam" id="4.10.280.10:FF:000070">
    <property type="entry name" value="transcription factor bHLH30"/>
    <property type="match status" value="1"/>
</dbReference>
<dbReference type="Gene3D" id="4.10.280.10">
    <property type="entry name" value="Helix-loop-helix DNA-binding domain"/>
    <property type="match status" value="1"/>
</dbReference>
<dbReference type="InterPro" id="IPR045847">
    <property type="entry name" value="AIG1-like"/>
</dbReference>
<dbReference type="InterPro" id="IPR011598">
    <property type="entry name" value="bHLH_dom"/>
</dbReference>
<dbReference type="InterPro" id="IPR036638">
    <property type="entry name" value="HLH_DNA-bd_sf"/>
</dbReference>
<dbReference type="PANTHER" id="PTHR45844:SF13">
    <property type="entry name" value="TRANSCRIPTION FACTOR AIG1"/>
    <property type="match status" value="1"/>
</dbReference>
<dbReference type="PANTHER" id="PTHR45844">
    <property type="entry name" value="TRANSCRIPTION FACTOR BHLH30"/>
    <property type="match status" value="1"/>
</dbReference>
<dbReference type="Pfam" id="PF00010">
    <property type="entry name" value="HLH"/>
    <property type="match status" value="1"/>
</dbReference>
<dbReference type="SMART" id="SM00353">
    <property type="entry name" value="HLH"/>
    <property type="match status" value="1"/>
</dbReference>
<dbReference type="SUPFAM" id="SSF47459">
    <property type="entry name" value="HLH, helix-loop-helix DNA-binding domain"/>
    <property type="match status" value="1"/>
</dbReference>
<dbReference type="PROSITE" id="PS50888">
    <property type="entry name" value="BHLH"/>
    <property type="match status" value="1"/>
</dbReference>
<comment type="function">
    <text evidence="4">Transcription factor required for MONOPTEROS-dependent root initiation in embryo. Transcriptionally controlled by MONOPTEROS.</text>
</comment>
<comment type="subunit">
    <text evidence="3 5">Homodimer (Probable). Interacts with LHW.</text>
</comment>
<comment type="subcellular location">
    <subcellularLocation>
        <location evidence="1 4">Nucleus</location>
    </subcellularLocation>
</comment>
<comment type="developmental stage">
    <text evidence="4">At the globular stage, expressed in cells adjacent to the hypophysis and at later embryonic stages, specific for vascular tissues.</text>
</comment>
<comment type="disruption phenotype">
    <text evidence="4">No visible phenotype, probably due to redundancy with BHLH30.</text>
</comment>
<accession>Q9LS08</accession>
<protein>
    <recommendedName>
        <fullName>Transcription factor AIG1</fullName>
        <shortName>AtAIG1</shortName>
    </recommendedName>
    <alternativeName>
        <fullName>Basic helix-loop-helix protein 32</fullName>
        <shortName>AtbHLH32</shortName>
        <shortName>bHLH 32</shortName>
    </alternativeName>
    <alternativeName>
        <fullName>Protein TARGET OF MOOPTEROS 5</fullName>
    </alternativeName>
    <alternativeName>
        <fullName>Transcription factor EN 54</fullName>
    </alternativeName>
    <alternativeName>
        <fullName>bHLH transcription factor bHLH032</fullName>
    </alternativeName>
</protein>
<reference key="1">
    <citation type="submission" date="2005-09" db="EMBL/GenBank/DDBJ databases">
        <title>An ABA-regulated gene (AtAIG1) in Arabidopsis thaliana.</title>
        <authorList>
            <person name="Kim H."/>
        </authorList>
    </citation>
    <scope>NUCLEOTIDE SEQUENCE [MRNA]</scope>
</reference>
<reference key="2">
    <citation type="journal article" date="2000" name="DNA Res.">
        <title>Structural analysis of Arabidopsis thaliana chromosome 3. I. Sequence features of the regions of 4,504,864 bp covered by sixty P1 and TAC clones.</title>
        <authorList>
            <person name="Sato S."/>
            <person name="Nakamura Y."/>
            <person name="Kaneko T."/>
            <person name="Katoh T."/>
            <person name="Asamizu E."/>
            <person name="Tabata S."/>
        </authorList>
    </citation>
    <scope>NUCLEOTIDE SEQUENCE [LARGE SCALE GENOMIC DNA]</scope>
    <source>
        <strain>cv. Columbia</strain>
    </source>
</reference>
<reference key="3">
    <citation type="journal article" date="2017" name="Plant J.">
        <title>Araport11: a complete reannotation of the Arabidopsis thaliana reference genome.</title>
        <authorList>
            <person name="Cheng C.Y."/>
            <person name="Krishnakumar V."/>
            <person name="Chan A.P."/>
            <person name="Thibaud-Nissen F."/>
            <person name="Schobel S."/>
            <person name="Town C.D."/>
        </authorList>
    </citation>
    <scope>GENOME REANNOTATION</scope>
    <source>
        <strain>cv. Columbia</strain>
    </source>
</reference>
<reference key="4">
    <citation type="journal article" date="2003" name="Science">
        <title>Empirical analysis of transcriptional activity in the Arabidopsis genome.</title>
        <authorList>
            <person name="Yamada K."/>
            <person name="Lim J."/>
            <person name="Dale J.M."/>
            <person name="Chen H."/>
            <person name="Shinn P."/>
            <person name="Palm C.J."/>
            <person name="Southwick A.M."/>
            <person name="Wu H.C."/>
            <person name="Kim C.J."/>
            <person name="Nguyen M."/>
            <person name="Pham P.K."/>
            <person name="Cheuk R.F."/>
            <person name="Karlin-Newmann G."/>
            <person name="Liu S.X."/>
            <person name="Lam B."/>
            <person name="Sakano H."/>
            <person name="Wu T."/>
            <person name="Yu G."/>
            <person name="Miranda M."/>
            <person name="Quach H.L."/>
            <person name="Tripp M."/>
            <person name="Chang C.H."/>
            <person name="Lee J.M."/>
            <person name="Toriumi M.J."/>
            <person name="Chan M.M."/>
            <person name="Tang C.C."/>
            <person name="Onodera C.S."/>
            <person name="Deng J.M."/>
            <person name="Akiyama K."/>
            <person name="Ansari Y."/>
            <person name="Arakawa T."/>
            <person name="Banh J."/>
            <person name="Banno F."/>
            <person name="Bowser L."/>
            <person name="Brooks S.Y."/>
            <person name="Carninci P."/>
            <person name="Chao Q."/>
            <person name="Choy N."/>
            <person name="Enju A."/>
            <person name="Goldsmith A.D."/>
            <person name="Gurjal M."/>
            <person name="Hansen N.F."/>
            <person name="Hayashizaki Y."/>
            <person name="Johnson-Hopson C."/>
            <person name="Hsuan V.W."/>
            <person name="Iida K."/>
            <person name="Karnes M."/>
            <person name="Khan S."/>
            <person name="Koesema E."/>
            <person name="Ishida J."/>
            <person name="Jiang P.X."/>
            <person name="Jones T."/>
            <person name="Kawai J."/>
            <person name="Kamiya A."/>
            <person name="Meyers C."/>
            <person name="Nakajima M."/>
            <person name="Narusaka M."/>
            <person name="Seki M."/>
            <person name="Sakurai T."/>
            <person name="Satou M."/>
            <person name="Tamse R."/>
            <person name="Vaysberg M."/>
            <person name="Wallender E.K."/>
            <person name="Wong C."/>
            <person name="Yamamura Y."/>
            <person name="Yuan S."/>
            <person name="Shinozaki K."/>
            <person name="Davis R.W."/>
            <person name="Theologis A."/>
            <person name="Ecker J.R."/>
        </authorList>
    </citation>
    <scope>NUCLEOTIDE SEQUENCE [LARGE SCALE MRNA]</scope>
    <source>
        <strain>cv. Columbia</strain>
    </source>
</reference>
<reference key="5">
    <citation type="submission" date="2002-03" db="EMBL/GenBank/DDBJ databases">
        <title>Full-length cDNA from Arabidopsis thaliana.</title>
        <authorList>
            <person name="Brover V.V."/>
            <person name="Troukhan M.E."/>
            <person name="Alexandrov N.A."/>
            <person name="Lu Y.-P."/>
            <person name="Flavell R.B."/>
            <person name="Feldmann K.A."/>
        </authorList>
    </citation>
    <scope>NUCLEOTIDE SEQUENCE [LARGE SCALE MRNA]</scope>
</reference>
<reference key="6">
    <citation type="journal article" date="2003" name="Mol. Biol. Evol.">
        <title>The basic helix-loop-helix transcription factor family in plants: a genome-wide study of protein structure and functional diversity.</title>
        <authorList>
            <person name="Heim M.A."/>
            <person name="Jakoby M."/>
            <person name="Werber M."/>
            <person name="Martin C."/>
            <person name="Weisshaar B."/>
            <person name="Bailey P.C."/>
        </authorList>
    </citation>
    <scope>NUCLEOTIDE SEQUENCE [MRNA] OF 181-344</scope>
    <scope>GENE FAMILY</scope>
    <scope>NOMENCLATURE</scope>
    <source>
        <strain>cv. Columbia</strain>
        <tissue>Root</tissue>
    </source>
</reference>
<reference key="7">
    <citation type="journal article" date="2003" name="Plant Cell">
        <title>The Arabidopsis basic/helix-loop-helix transcription factor family.</title>
        <authorList>
            <person name="Toledo-Ortiz G."/>
            <person name="Huq E."/>
            <person name="Quail P.H."/>
        </authorList>
    </citation>
    <scope>GENE FAMILY</scope>
</reference>
<reference key="8">
    <citation type="journal article" date="2003" name="Plant Cell">
        <title>Update on the basic helix-loop-helix transcription factor gene family in Arabidopsis thaliana.</title>
        <authorList>
            <person name="Bailey P.C."/>
            <person name="Martin C."/>
            <person name="Toledo-Ortiz G."/>
            <person name="Quail P.H."/>
            <person name="Huq E."/>
            <person name="Heim M.A."/>
            <person name="Jakoby M."/>
            <person name="Werber M."/>
            <person name="Weisshaar B."/>
        </authorList>
    </citation>
    <scope>GENE FAMILY</scope>
    <scope>NOMENCLATURE</scope>
</reference>
<reference key="9">
    <citation type="journal article" date="2007" name="Development">
        <title>Regulation of the Arabidopsis root vascular initial population by LONESOME HIGHWAY.</title>
        <authorList>
            <person name="Ohashi-Ito K."/>
            <person name="Bergmann D.C."/>
        </authorList>
    </citation>
    <scope>INTERACTION WITH LHW</scope>
</reference>
<reference key="10">
    <citation type="journal article" date="2010" name="Nature">
        <title>MONOPTEROS controls embryonic root initiation by regulating a mobile transcription factor.</title>
        <authorList>
            <person name="Schlereth A."/>
            <person name="Moller B."/>
            <person name="Liu W."/>
            <person name="Kientz M."/>
            <person name="Flipse J."/>
            <person name="Rademacher E.H."/>
            <person name="Schmid M."/>
            <person name="Jurgens G."/>
            <person name="Weijers D."/>
        </authorList>
    </citation>
    <scope>FUNCTION</scope>
    <scope>DEVELOPMENTAL STAGE</scope>
    <scope>SUBCELLULAR LOCATION</scope>
    <scope>DISRUPTION PHENOTYPE</scope>
    <source>
        <strain>cv. Columbia</strain>
    </source>
</reference>
<organism>
    <name type="scientific">Arabidopsis thaliana</name>
    <name type="common">Mouse-ear cress</name>
    <dbReference type="NCBI Taxonomy" id="3702"/>
    <lineage>
        <taxon>Eukaryota</taxon>
        <taxon>Viridiplantae</taxon>
        <taxon>Streptophyta</taxon>
        <taxon>Embryophyta</taxon>
        <taxon>Tracheophyta</taxon>
        <taxon>Spermatophyta</taxon>
        <taxon>Magnoliopsida</taxon>
        <taxon>eudicotyledons</taxon>
        <taxon>Gunneridae</taxon>
        <taxon>Pentapetalae</taxon>
        <taxon>rosids</taxon>
        <taxon>malvids</taxon>
        <taxon>Brassicales</taxon>
        <taxon>Brassicaceae</taxon>
        <taxon>Camelineae</taxon>
        <taxon>Arabidopsis</taxon>
    </lineage>
</organism>
<feature type="chain" id="PRO_0000358740" description="Transcription factor AIG1">
    <location>
        <begin position="1"/>
        <end position="344"/>
    </location>
</feature>
<feature type="domain" description="bHLH" evidence="1">
    <location>
        <begin position="131"/>
        <end position="180"/>
    </location>
</feature>
<feature type="region of interest" description="Disordered" evidence="2">
    <location>
        <begin position="313"/>
        <end position="344"/>
    </location>
</feature>
<feature type="compositionally biased region" description="Low complexity" evidence="2">
    <location>
        <begin position="318"/>
        <end position="327"/>
    </location>
</feature>
<sequence>MYAMKEEDCLQTFHNLQDYQDQFHLHHHPQILPWSSTSLPSFDPLHFPSNPTRYSDPVHYFNRRASSSSSSFDYNDGFVSPPPSMDHPQNHLRILSEALGPIMRRGSSFGFDGEIMGKLSAQEVMDAKALAASKSHSEAERRRRERINTHLAKLRSILPNTTKTDKASLLAEVIQHMKELKRQTSQITDTYQVPTECDDLTVDSSYNDEEGNLVIRASFCCQDRTDLMHDVINALKSLRLRTLKAEIATVGGRVKNILFLSREYDDEEDHDSYRRNFDGDDVEDYDEERMMNNRVSSIEEALKAVIEKCVHNNDESNDNNNLEKSSSGGIKRQRTSKMVNRCYN</sequence>